<gene>
    <name evidence="1" type="primary">atpD</name>
    <name type="ordered locus">LPC_3297</name>
</gene>
<sequence>MSLGTVVEVIGAVVDVEFPRDSVPKVNDALKLVDSDLVFEVQQQLGDGVVRTIAMGTTDGLKRGLKAENTGHPIQVPVGKKTLGRIMDVLGRPVDDAGPIDAEETWAIHRKAPSYEEQAGSQELLETGIKVIDLLCPFAKGGKVGLFGGAGVGKTVNMMELIRNIAIEHSGYSVFAGVGERTREGNDFYHEMKDSNVLDKVSLVYGQMNEPPGNRLRVALTGLTMAEKFRDEGRDVLLFIDNIYRYTLAGVEVSALLGRMPSAVGYQPTLAEEMGMLQERITSTKTGSITSIQAVYVPADDLTDPSPATTFAHLDATVVLSRQIAELGIYPAVDPLDSTSRQLDPLIVGQEHYDTARRVQQTLQRYKELKDIIAILGMDELSEEDKRVVTRARKIQRFLSQPFFVAEVFTGSPGKYVSLKDTIKGFQGILAGEYDDLPEQAFYMVGSIEEAVAKAKTL</sequence>
<feature type="chain" id="PRO_1000055129" description="ATP synthase subunit beta">
    <location>
        <begin position="1"/>
        <end position="458"/>
    </location>
</feature>
<feature type="binding site" evidence="1">
    <location>
        <begin position="148"/>
        <end position="155"/>
    </location>
    <ligand>
        <name>ATP</name>
        <dbReference type="ChEBI" id="CHEBI:30616"/>
    </ligand>
</feature>
<comment type="function">
    <text evidence="1">Produces ATP from ADP in the presence of a proton gradient across the membrane. The catalytic sites are hosted primarily by the beta subunits.</text>
</comment>
<comment type="catalytic activity">
    <reaction evidence="1">
        <text>ATP + H2O + 4 H(+)(in) = ADP + phosphate + 5 H(+)(out)</text>
        <dbReference type="Rhea" id="RHEA:57720"/>
        <dbReference type="ChEBI" id="CHEBI:15377"/>
        <dbReference type="ChEBI" id="CHEBI:15378"/>
        <dbReference type="ChEBI" id="CHEBI:30616"/>
        <dbReference type="ChEBI" id="CHEBI:43474"/>
        <dbReference type="ChEBI" id="CHEBI:456216"/>
        <dbReference type="EC" id="7.1.2.2"/>
    </reaction>
</comment>
<comment type="subunit">
    <text evidence="1">F-type ATPases have 2 components, CF(1) - the catalytic core - and CF(0) - the membrane proton channel. CF(1) has five subunits: alpha(3), beta(3), gamma(1), delta(1), epsilon(1). CF(0) has three main subunits: a(1), b(2) and c(9-12). The alpha and beta chains form an alternating ring which encloses part of the gamma chain. CF(1) is attached to CF(0) by a central stalk formed by the gamma and epsilon chains, while a peripheral stalk is formed by the delta and b chains.</text>
</comment>
<comment type="subcellular location">
    <subcellularLocation>
        <location evidence="1">Cell inner membrane</location>
        <topology evidence="1">Peripheral membrane protein</topology>
    </subcellularLocation>
</comment>
<comment type="similarity">
    <text evidence="1">Belongs to the ATPase alpha/beta chains family.</text>
</comment>
<proteinExistence type="inferred from homology"/>
<reference key="1">
    <citation type="submission" date="2006-11" db="EMBL/GenBank/DDBJ databases">
        <title>Identification and characterization of a new conjugation/ type IVA secretion system (trb/tra) of L. pneumophila Corby localized on a mobile genomic island.</title>
        <authorList>
            <person name="Gloeckner G."/>
            <person name="Albert-Weissenberger C."/>
            <person name="Weinmann E."/>
            <person name="Jacobi S."/>
            <person name="Schunder E."/>
            <person name="Steinert M."/>
            <person name="Buchrieser C."/>
            <person name="Hacker J."/>
            <person name="Heuner K."/>
        </authorList>
    </citation>
    <scope>NUCLEOTIDE SEQUENCE [LARGE SCALE GENOMIC DNA]</scope>
    <source>
        <strain>Corby</strain>
    </source>
</reference>
<organism>
    <name type="scientific">Legionella pneumophila (strain Corby)</name>
    <dbReference type="NCBI Taxonomy" id="400673"/>
    <lineage>
        <taxon>Bacteria</taxon>
        <taxon>Pseudomonadati</taxon>
        <taxon>Pseudomonadota</taxon>
        <taxon>Gammaproteobacteria</taxon>
        <taxon>Legionellales</taxon>
        <taxon>Legionellaceae</taxon>
        <taxon>Legionella</taxon>
    </lineage>
</organism>
<evidence type="ECO:0000255" key="1">
    <source>
        <dbReference type="HAMAP-Rule" id="MF_01347"/>
    </source>
</evidence>
<keyword id="KW-0066">ATP synthesis</keyword>
<keyword id="KW-0067">ATP-binding</keyword>
<keyword id="KW-0997">Cell inner membrane</keyword>
<keyword id="KW-1003">Cell membrane</keyword>
<keyword id="KW-0139">CF(1)</keyword>
<keyword id="KW-0375">Hydrogen ion transport</keyword>
<keyword id="KW-0406">Ion transport</keyword>
<keyword id="KW-0472">Membrane</keyword>
<keyword id="KW-0547">Nucleotide-binding</keyword>
<keyword id="KW-1278">Translocase</keyword>
<keyword id="KW-0813">Transport</keyword>
<dbReference type="EC" id="7.1.2.2" evidence="1"/>
<dbReference type="EMBL" id="CP000675">
    <property type="protein sequence ID" value="ABQ57183.1"/>
    <property type="molecule type" value="Genomic_DNA"/>
</dbReference>
<dbReference type="RefSeq" id="WP_010948666.1">
    <property type="nucleotide sequence ID" value="NZ_JAPMSS010000003.1"/>
</dbReference>
<dbReference type="SMR" id="A5III3"/>
<dbReference type="GeneID" id="57036988"/>
<dbReference type="KEGG" id="lpc:LPC_3297"/>
<dbReference type="HOGENOM" id="CLU_022398_0_2_6"/>
<dbReference type="GO" id="GO:0005886">
    <property type="term" value="C:plasma membrane"/>
    <property type="evidence" value="ECO:0007669"/>
    <property type="project" value="UniProtKB-SubCell"/>
</dbReference>
<dbReference type="GO" id="GO:0045259">
    <property type="term" value="C:proton-transporting ATP synthase complex"/>
    <property type="evidence" value="ECO:0007669"/>
    <property type="project" value="UniProtKB-KW"/>
</dbReference>
<dbReference type="GO" id="GO:0005524">
    <property type="term" value="F:ATP binding"/>
    <property type="evidence" value="ECO:0007669"/>
    <property type="project" value="UniProtKB-UniRule"/>
</dbReference>
<dbReference type="GO" id="GO:0016887">
    <property type="term" value="F:ATP hydrolysis activity"/>
    <property type="evidence" value="ECO:0007669"/>
    <property type="project" value="InterPro"/>
</dbReference>
<dbReference type="GO" id="GO:0046933">
    <property type="term" value="F:proton-transporting ATP synthase activity, rotational mechanism"/>
    <property type="evidence" value="ECO:0007669"/>
    <property type="project" value="UniProtKB-UniRule"/>
</dbReference>
<dbReference type="CDD" id="cd18110">
    <property type="entry name" value="ATP-synt_F1_beta_C"/>
    <property type="match status" value="1"/>
</dbReference>
<dbReference type="CDD" id="cd18115">
    <property type="entry name" value="ATP-synt_F1_beta_N"/>
    <property type="match status" value="1"/>
</dbReference>
<dbReference type="CDD" id="cd01133">
    <property type="entry name" value="F1-ATPase_beta_CD"/>
    <property type="match status" value="1"/>
</dbReference>
<dbReference type="FunFam" id="1.10.1140.10:FF:000001">
    <property type="entry name" value="ATP synthase subunit beta"/>
    <property type="match status" value="1"/>
</dbReference>
<dbReference type="FunFam" id="3.40.50.300:FF:000004">
    <property type="entry name" value="ATP synthase subunit beta"/>
    <property type="match status" value="1"/>
</dbReference>
<dbReference type="Gene3D" id="2.40.10.170">
    <property type="match status" value="1"/>
</dbReference>
<dbReference type="Gene3D" id="1.10.1140.10">
    <property type="entry name" value="Bovine Mitochondrial F1-atpase, Atp Synthase Beta Chain, Chain D, domain 3"/>
    <property type="match status" value="1"/>
</dbReference>
<dbReference type="Gene3D" id="3.40.50.300">
    <property type="entry name" value="P-loop containing nucleotide triphosphate hydrolases"/>
    <property type="match status" value="1"/>
</dbReference>
<dbReference type="HAMAP" id="MF_01347">
    <property type="entry name" value="ATP_synth_beta_bact"/>
    <property type="match status" value="1"/>
</dbReference>
<dbReference type="InterPro" id="IPR003593">
    <property type="entry name" value="AAA+_ATPase"/>
</dbReference>
<dbReference type="InterPro" id="IPR055190">
    <property type="entry name" value="ATP-synt_VA_C"/>
</dbReference>
<dbReference type="InterPro" id="IPR005722">
    <property type="entry name" value="ATP_synth_F1_bsu"/>
</dbReference>
<dbReference type="InterPro" id="IPR020003">
    <property type="entry name" value="ATPase_a/bsu_AS"/>
</dbReference>
<dbReference type="InterPro" id="IPR050053">
    <property type="entry name" value="ATPase_alpha/beta_chains"/>
</dbReference>
<dbReference type="InterPro" id="IPR004100">
    <property type="entry name" value="ATPase_F1/V1/A1_a/bsu_N"/>
</dbReference>
<dbReference type="InterPro" id="IPR036121">
    <property type="entry name" value="ATPase_F1/V1/A1_a/bsu_N_sf"/>
</dbReference>
<dbReference type="InterPro" id="IPR000194">
    <property type="entry name" value="ATPase_F1/V1/A1_a/bsu_nucl-bd"/>
</dbReference>
<dbReference type="InterPro" id="IPR024034">
    <property type="entry name" value="ATPase_F1/V1_b/a_C"/>
</dbReference>
<dbReference type="InterPro" id="IPR027417">
    <property type="entry name" value="P-loop_NTPase"/>
</dbReference>
<dbReference type="NCBIfam" id="TIGR01039">
    <property type="entry name" value="atpD"/>
    <property type="match status" value="1"/>
</dbReference>
<dbReference type="PANTHER" id="PTHR15184">
    <property type="entry name" value="ATP SYNTHASE"/>
    <property type="match status" value="1"/>
</dbReference>
<dbReference type="PANTHER" id="PTHR15184:SF71">
    <property type="entry name" value="ATP SYNTHASE SUBUNIT BETA, MITOCHONDRIAL"/>
    <property type="match status" value="1"/>
</dbReference>
<dbReference type="Pfam" id="PF00006">
    <property type="entry name" value="ATP-synt_ab"/>
    <property type="match status" value="1"/>
</dbReference>
<dbReference type="Pfam" id="PF02874">
    <property type="entry name" value="ATP-synt_ab_N"/>
    <property type="match status" value="1"/>
</dbReference>
<dbReference type="Pfam" id="PF22919">
    <property type="entry name" value="ATP-synt_VA_C"/>
    <property type="match status" value="1"/>
</dbReference>
<dbReference type="SMART" id="SM00382">
    <property type="entry name" value="AAA"/>
    <property type="match status" value="1"/>
</dbReference>
<dbReference type="SUPFAM" id="SSF47917">
    <property type="entry name" value="C-terminal domain of alpha and beta subunits of F1 ATP synthase"/>
    <property type="match status" value="1"/>
</dbReference>
<dbReference type="SUPFAM" id="SSF50615">
    <property type="entry name" value="N-terminal domain of alpha and beta subunits of F1 ATP synthase"/>
    <property type="match status" value="1"/>
</dbReference>
<dbReference type="SUPFAM" id="SSF52540">
    <property type="entry name" value="P-loop containing nucleoside triphosphate hydrolases"/>
    <property type="match status" value="1"/>
</dbReference>
<dbReference type="PROSITE" id="PS00152">
    <property type="entry name" value="ATPASE_ALPHA_BETA"/>
    <property type="match status" value="1"/>
</dbReference>
<accession>A5III3</accession>
<name>ATPB_LEGPC</name>
<protein>
    <recommendedName>
        <fullName evidence="1">ATP synthase subunit beta</fullName>
        <ecNumber evidence="1">7.1.2.2</ecNumber>
    </recommendedName>
    <alternativeName>
        <fullName evidence="1">ATP synthase F1 sector subunit beta</fullName>
    </alternativeName>
    <alternativeName>
        <fullName evidence="1">F-ATPase subunit beta</fullName>
    </alternativeName>
</protein>